<dbReference type="EMBL" id="AP009351">
    <property type="protein sequence ID" value="BAF67851.1"/>
    <property type="molecule type" value="Genomic_DNA"/>
</dbReference>
<dbReference type="RefSeq" id="WP_000650082.1">
    <property type="nucleotide sequence ID" value="NZ_JBBIAE010000001.1"/>
</dbReference>
<dbReference type="SMR" id="A6QHL9"/>
<dbReference type="GeneID" id="66839865"/>
<dbReference type="KEGG" id="sae:NWMN_1579"/>
<dbReference type="HOGENOM" id="CLU_108412_0_0_9"/>
<dbReference type="Proteomes" id="UP000006386">
    <property type="component" value="Chromosome"/>
</dbReference>
<dbReference type="GO" id="GO:0005524">
    <property type="term" value="F:ATP binding"/>
    <property type="evidence" value="ECO:0007669"/>
    <property type="project" value="UniProtKB-KW"/>
</dbReference>
<dbReference type="GO" id="GO:0003677">
    <property type="term" value="F:DNA binding"/>
    <property type="evidence" value="ECO:0007669"/>
    <property type="project" value="UniProtKB-KW"/>
</dbReference>
<dbReference type="GO" id="GO:0008270">
    <property type="term" value="F:zinc ion binding"/>
    <property type="evidence" value="ECO:0007669"/>
    <property type="project" value="UniProtKB-UniRule"/>
</dbReference>
<dbReference type="GO" id="GO:0045892">
    <property type="term" value="P:negative regulation of DNA-templated transcription"/>
    <property type="evidence" value="ECO:0007669"/>
    <property type="project" value="UniProtKB-UniRule"/>
</dbReference>
<dbReference type="HAMAP" id="MF_00440">
    <property type="entry name" value="NrdR"/>
    <property type="match status" value="1"/>
</dbReference>
<dbReference type="InterPro" id="IPR005144">
    <property type="entry name" value="ATP-cone_dom"/>
</dbReference>
<dbReference type="InterPro" id="IPR055173">
    <property type="entry name" value="NrdR-like_N"/>
</dbReference>
<dbReference type="InterPro" id="IPR003796">
    <property type="entry name" value="RNR_NrdR-like"/>
</dbReference>
<dbReference type="NCBIfam" id="TIGR00244">
    <property type="entry name" value="transcriptional regulator NrdR"/>
    <property type="match status" value="1"/>
</dbReference>
<dbReference type="PANTHER" id="PTHR30455">
    <property type="entry name" value="TRANSCRIPTIONAL REPRESSOR NRDR"/>
    <property type="match status" value="1"/>
</dbReference>
<dbReference type="PANTHER" id="PTHR30455:SF2">
    <property type="entry name" value="TRANSCRIPTIONAL REPRESSOR NRDR"/>
    <property type="match status" value="1"/>
</dbReference>
<dbReference type="Pfam" id="PF03477">
    <property type="entry name" value="ATP-cone"/>
    <property type="match status" value="1"/>
</dbReference>
<dbReference type="Pfam" id="PF22811">
    <property type="entry name" value="Zn_ribbon_NrdR"/>
    <property type="match status" value="1"/>
</dbReference>
<dbReference type="PROSITE" id="PS51161">
    <property type="entry name" value="ATP_CONE"/>
    <property type="match status" value="1"/>
</dbReference>
<comment type="function">
    <text evidence="1">Negatively regulates transcription of bacterial ribonucleotide reductase nrd genes and operons by binding to NrdR-boxes.</text>
</comment>
<comment type="cofactor">
    <cofactor evidence="1">
        <name>Zn(2+)</name>
        <dbReference type="ChEBI" id="CHEBI:29105"/>
    </cofactor>
    <text evidence="1">Binds 1 zinc ion.</text>
</comment>
<comment type="similarity">
    <text evidence="1">Belongs to the NrdR family.</text>
</comment>
<sequence>MKCPKCNSTQSKVVDSRHADELNAIRRRRECENCGTRFTTFEHIEVSQLIVVKKDGTREQFSREKILNGLVRSCEKRPVRYQQLEDITNKVEWQLRDEGHTEVSSRDIGEHVMNLLMHVDQVSYVRFASVYKEFKDVDQLLASMQGILSENKRSDA</sequence>
<feature type="chain" id="PRO_1000080840" description="Transcriptional repressor NrdR">
    <location>
        <begin position="1"/>
        <end position="156"/>
    </location>
</feature>
<feature type="domain" description="ATP-cone" evidence="1">
    <location>
        <begin position="49"/>
        <end position="139"/>
    </location>
</feature>
<feature type="zinc finger region" evidence="1">
    <location>
        <begin position="3"/>
        <end position="34"/>
    </location>
</feature>
<reference key="1">
    <citation type="journal article" date="2008" name="J. Bacteriol.">
        <title>Genome sequence of Staphylococcus aureus strain Newman and comparative analysis of staphylococcal genomes: polymorphism and evolution of two major pathogenicity islands.</title>
        <authorList>
            <person name="Baba T."/>
            <person name="Bae T."/>
            <person name="Schneewind O."/>
            <person name="Takeuchi F."/>
            <person name="Hiramatsu K."/>
        </authorList>
    </citation>
    <scope>NUCLEOTIDE SEQUENCE [LARGE SCALE GENOMIC DNA]</scope>
    <source>
        <strain>Newman</strain>
    </source>
</reference>
<gene>
    <name evidence="1" type="primary">nrdR</name>
    <name type="ordered locus">NWMN_1579</name>
</gene>
<organism>
    <name type="scientific">Staphylococcus aureus (strain Newman)</name>
    <dbReference type="NCBI Taxonomy" id="426430"/>
    <lineage>
        <taxon>Bacteria</taxon>
        <taxon>Bacillati</taxon>
        <taxon>Bacillota</taxon>
        <taxon>Bacilli</taxon>
        <taxon>Bacillales</taxon>
        <taxon>Staphylococcaceae</taxon>
        <taxon>Staphylococcus</taxon>
    </lineage>
</organism>
<evidence type="ECO:0000255" key="1">
    <source>
        <dbReference type="HAMAP-Rule" id="MF_00440"/>
    </source>
</evidence>
<proteinExistence type="inferred from homology"/>
<protein>
    <recommendedName>
        <fullName evidence="1">Transcriptional repressor NrdR</fullName>
    </recommendedName>
</protein>
<name>NRDR_STAAE</name>
<keyword id="KW-0067">ATP-binding</keyword>
<keyword id="KW-0238">DNA-binding</keyword>
<keyword id="KW-0479">Metal-binding</keyword>
<keyword id="KW-0547">Nucleotide-binding</keyword>
<keyword id="KW-0678">Repressor</keyword>
<keyword id="KW-0804">Transcription</keyword>
<keyword id="KW-0805">Transcription regulation</keyword>
<keyword id="KW-0862">Zinc</keyword>
<keyword id="KW-0863">Zinc-finger</keyword>
<accession>A6QHL9</accession>